<proteinExistence type="inferred from homology"/>
<protein>
    <recommendedName>
        <fullName evidence="1">Regulatory protein RecX</fullName>
    </recommendedName>
</protein>
<name>RECX_SALPK</name>
<keyword id="KW-0963">Cytoplasm</keyword>
<feature type="chain" id="PRO_1000137192" description="Regulatory protein RecX">
    <location>
        <begin position="1"/>
        <end position="166"/>
    </location>
</feature>
<sequence length="166" mass="19708">MSEPTSRRPAYARLLDRAVRILAVRDHSEQELRRKLSAPVMGKNGPEEIDATADDYERVIAWFHEHHYLDDERFVMRFIASRSRKGYGPARIRQELNQKGISRESTEKAMRECEIDWSEMAREQAVRKYGEPLPSNFSEKVKVQRFLLYRGYLMDDIQQIWRNFAD</sequence>
<reference key="1">
    <citation type="journal article" date="2009" name="BMC Genomics">
        <title>Pseudogene accumulation in the evolutionary histories of Salmonella enterica serovars Paratyphi A and Typhi.</title>
        <authorList>
            <person name="Holt K.E."/>
            <person name="Thomson N.R."/>
            <person name="Wain J."/>
            <person name="Langridge G.C."/>
            <person name="Hasan R."/>
            <person name="Bhutta Z.A."/>
            <person name="Quail M.A."/>
            <person name="Norbertczak H."/>
            <person name="Walker D."/>
            <person name="Simmonds M."/>
            <person name="White B."/>
            <person name="Bason N."/>
            <person name="Mungall K."/>
            <person name="Dougan G."/>
            <person name="Parkhill J."/>
        </authorList>
    </citation>
    <scope>NUCLEOTIDE SEQUENCE [LARGE SCALE GENOMIC DNA]</scope>
    <source>
        <strain>AKU_12601</strain>
    </source>
</reference>
<organism>
    <name type="scientific">Salmonella paratyphi A (strain AKU_12601)</name>
    <dbReference type="NCBI Taxonomy" id="554290"/>
    <lineage>
        <taxon>Bacteria</taxon>
        <taxon>Pseudomonadati</taxon>
        <taxon>Pseudomonadota</taxon>
        <taxon>Gammaproteobacteria</taxon>
        <taxon>Enterobacterales</taxon>
        <taxon>Enterobacteriaceae</taxon>
        <taxon>Salmonella</taxon>
    </lineage>
</organism>
<gene>
    <name evidence="1" type="primary">recX</name>
    <name type="ordered locus">SSPA2500</name>
</gene>
<accession>B5BEN6</accession>
<evidence type="ECO:0000255" key="1">
    <source>
        <dbReference type="HAMAP-Rule" id="MF_01114"/>
    </source>
</evidence>
<dbReference type="EMBL" id="FM200053">
    <property type="protein sequence ID" value="CAR60736.1"/>
    <property type="molecule type" value="Genomic_DNA"/>
</dbReference>
<dbReference type="RefSeq" id="WP_001294868.1">
    <property type="nucleotide sequence ID" value="NC_011147.1"/>
</dbReference>
<dbReference type="SMR" id="B5BEN6"/>
<dbReference type="KEGG" id="sek:SSPA2500"/>
<dbReference type="HOGENOM" id="CLU_066607_3_2_6"/>
<dbReference type="Proteomes" id="UP000001869">
    <property type="component" value="Chromosome"/>
</dbReference>
<dbReference type="GO" id="GO:0005737">
    <property type="term" value="C:cytoplasm"/>
    <property type="evidence" value="ECO:0007669"/>
    <property type="project" value="UniProtKB-SubCell"/>
</dbReference>
<dbReference type="GO" id="GO:0006282">
    <property type="term" value="P:regulation of DNA repair"/>
    <property type="evidence" value="ECO:0007669"/>
    <property type="project" value="UniProtKB-UniRule"/>
</dbReference>
<dbReference type="FunFam" id="1.10.10.10:FF:000133">
    <property type="entry name" value="Regulatory protein RecX"/>
    <property type="match status" value="1"/>
</dbReference>
<dbReference type="FunFam" id="1.10.10.10:FF:000134">
    <property type="entry name" value="Regulatory protein RecX"/>
    <property type="match status" value="1"/>
</dbReference>
<dbReference type="Gene3D" id="1.10.10.10">
    <property type="entry name" value="Winged helix-like DNA-binding domain superfamily/Winged helix DNA-binding domain"/>
    <property type="match status" value="3"/>
</dbReference>
<dbReference type="HAMAP" id="MF_01114">
    <property type="entry name" value="RecX"/>
    <property type="match status" value="1"/>
</dbReference>
<dbReference type="InterPro" id="IPR053926">
    <property type="entry name" value="RecX_HTH_1st"/>
</dbReference>
<dbReference type="InterPro" id="IPR053924">
    <property type="entry name" value="RecX_HTH_2nd"/>
</dbReference>
<dbReference type="InterPro" id="IPR053925">
    <property type="entry name" value="RecX_HTH_3rd"/>
</dbReference>
<dbReference type="InterPro" id="IPR003783">
    <property type="entry name" value="Regulatory_RecX"/>
</dbReference>
<dbReference type="InterPro" id="IPR036388">
    <property type="entry name" value="WH-like_DNA-bd_sf"/>
</dbReference>
<dbReference type="NCBIfam" id="NF001052">
    <property type="entry name" value="PRK00117.1-1"/>
    <property type="match status" value="1"/>
</dbReference>
<dbReference type="PANTHER" id="PTHR33602">
    <property type="entry name" value="REGULATORY PROTEIN RECX FAMILY PROTEIN"/>
    <property type="match status" value="1"/>
</dbReference>
<dbReference type="PANTHER" id="PTHR33602:SF1">
    <property type="entry name" value="REGULATORY PROTEIN RECX FAMILY PROTEIN"/>
    <property type="match status" value="1"/>
</dbReference>
<dbReference type="Pfam" id="PF21982">
    <property type="entry name" value="RecX_HTH1"/>
    <property type="match status" value="1"/>
</dbReference>
<dbReference type="Pfam" id="PF02631">
    <property type="entry name" value="RecX_HTH2"/>
    <property type="match status" value="1"/>
</dbReference>
<dbReference type="Pfam" id="PF21981">
    <property type="entry name" value="RecX_HTH3"/>
    <property type="match status" value="1"/>
</dbReference>
<comment type="function">
    <text evidence="1">Modulates RecA activity.</text>
</comment>
<comment type="subcellular location">
    <subcellularLocation>
        <location evidence="1">Cytoplasm</location>
    </subcellularLocation>
</comment>
<comment type="similarity">
    <text evidence="1">Belongs to the RecX family.</text>
</comment>